<sequence length="303" mass="33449">MIKQRTLKNIIRATGVGLHSGEKVYLTLKPAPVDTGIVFCRTDLDPVVEIPARAENVGETTMSTTLVKGDVKVDTVEHLLSAMAGLGIDNAYVELSASEVPIMDGSAGPFVFLIQSAGLQEQEAAKKFIRIKREVSVEEGDKRAVFVPFDGFKVSFEIDFDHPVFRGRTQQASVDFSSTSFVKEVSRARTFGFMRDIEYLRSQNLALGGSVENAIVVDENRVLNEDGLRYEDEFVKHKILDAIGDLYLLGNSLIGEFRGFKSGHALNNQLLRSLIADRDAWEVVTFEDARTAPISYMRPAAAV</sequence>
<reference key="1">
    <citation type="submission" date="2007-06" db="EMBL/GenBank/DDBJ databases">
        <authorList>
            <person name="Dodson R.J."/>
            <person name="Harkins D."/>
            <person name="Paulsen I.T."/>
        </authorList>
    </citation>
    <scope>NUCLEOTIDE SEQUENCE [LARGE SCALE GENOMIC DNA]</scope>
    <source>
        <strain>DSM 24068 / PA7</strain>
    </source>
</reference>
<dbReference type="EC" id="3.5.1.108" evidence="1"/>
<dbReference type="EMBL" id="CP000744">
    <property type="protein sequence ID" value="ABR84487.1"/>
    <property type="molecule type" value="Genomic_DNA"/>
</dbReference>
<dbReference type="RefSeq" id="WP_003150391.1">
    <property type="nucleotide sequence ID" value="NC_009656.1"/>
</dbReference>
<dbReference type="SMR" id="A6VB79"/>
<dbReference type="GeneID" id="77222906"/>
<dbReference type="KEGG" id="pap:PSPA7_4978"/>
<dbReference type="HOGENOM" id="CLU_046528_1_0_6"/>
<dbReference type="UniPathway" id="UPA00359">
    <property type="reaction ID" value="UER00478"/>
</dbReference>
<dbReference type="Proteomes" id="UP000001582">
    <property type="component" value="Chromosome"/>
</dbReference>
<dbReference type="GO" id="GO:0016020">
    <property type="term" value="C:membrane"/>
    <property type="evidence" value="ECO:0007669"/>
    <property type="project" value="GOC"/>
</dbReference>
<dbReference type="GO" id="GO:0046872">
    <property type="term" value="F:metal ion binding"/>
    <property type="evidence" value="ECO:0007669"/>
    <property type="project" value="UniProtKB-KW"/>
</dbReference>
<dbReference type="GO" id="GO:0103117">
    <property type="term" value="F:UDP-3-O-acyl-N-acetylglucosamine deacetylase activity"/>
    <property type="evidence" value="ECO:0007669"/>
    <property type="project" value="UniProtKB-UniRule"/>
</dbReference>
<dbReference type="GO" id="GO:0009245">
    <property type="term" value="P:lipid A biosynthetic process"/>
    <property type="evidence" value="ECO:0007669"/>
    <property type="project" value="UniProtKB-UniRule"/>
</dbReference>
<dbReference type="FunFam" id="3.30.1700.10:FF:000001">
    <property type="entry name" value="UDP-3-O-acyl-N-acetylglucosamine deacetylase"/>
    <property type="match status" value="1"/>
</dbReference>
<dbReference type="FunFam" id="3.30.230.20:FF:000001">
    <property type="entry name" value="UDP-3-O-acyl-N-acetylglucosamine deacetylase"/>
    <property type="match status" value="1"/>
</dbReference>
<dbReference type="Gene3D" id="3.30.230.20">
    <property type="entry name" value="lpxc deacetylase, domain 1"/>
    <property type="match status" value="1"/>
</dbReference>
<dbReference type="Gene3D" id="3.30.1700.10">
    <property type="entry name" value="lpxc deacetylase, domain 2"/>
    <property type="match status" value="1"/>
</dbReference>
<dbReference type="HAMAP" id="MF_00388">
    <property type="entry name" value="LpxC"/>
    <property type="match status" value="1"/>
</dbReference>
<dbReference type="InterPro" id="IPR020568">
    <property type="entry name" value="Ribosomal_Su5_D2-typ_SF"/>
</dbReference>
<dbReference type="InterPro" id="IPR004463">
    <property type="entry name" value="UDP-acyl_GlcNac_deAcase"/>
</dbReference>
<dbReference type="InterPro" id="IPR011334">
    <property type="entry name" value="UDP-acyl_GlcNac_deAcase_C"/>
</dbReference>
<dbReference type="InterPro" id="IPR015870">
    <property type="entry name" value="UDP-acyl_N-AcGlcN_deAcase_N"/>
</dbReference>
<dbReference type="NCBIfam" id="TIGR00325">
    <property type="entry name" value="lpxC"/>
    <property type="match status" value="1"/>
</dbReference>
<dbReference type="PANTHER" id="PTHR33694">
    <property type="entry name" value="UDP-3-O-ACYL-N-ACETYLGLUCOSAMINE DEACETYLASE 1, MITOCHONDRIAL-RELATED"/>
    <property type="match status" value="1"/>
</dbReference>
<dbReference type="PANTHER" id="PTHR33694:SF1">
    <property type="entry name" value="UDP-3-O-ACYL-N-ACETYLGLUCOSAMINE DEACETYLASE 1, MITOCHONDRIAL-RELATED"/>
    <property type="match status" value="1"/>
</dbReference>
<dbReference type="Pfam" id="PF03331">
    <property type="entry name" value="LpxC"/>
    <property type="match status" value="1"/>
</dbReference>
<dbReference type="SUPFAM" id="SSF54211">
    <property type="entry name" value="Ribosomal protein S5 domain 2-like"/>
    <property type="match status" value="2"/>
</dbReference>
<protein>
    <recommendedName>
        <fullName evidence="1">UDP-3-O-acyl-N-acetylglucosamine deacetylase</fullName>
        <shortName evidence="1">UDP-3-O-acyl-GlcNAc deacetylase</shortName>
        <ecNumber evidence="1">3.5.1.108</ecNumber>
    </recommendedName>
    <alternativeName>
        <fullName evidence="1">UDP-3-O-[R-3-hydroxymyristoyl]-N-acetylglucosamine deacetylase</fullName>
    </alternativeName>
</protein>
<keyword id="KW-0378">Hydrolase</keyword>
<keyword id="KW-0441">Lipid A biosynthesis</keyword>
<keyword id="KW-0444">Lipid biosynthesis</keyword>
<keyword id="KW-0443">Lipid metabolism</keyword>
<keyword id="KW-0479">Metal-binding</keyword>
<keyword id="KW-0862">Zinc</keyword>
<proteinExistence type="inferred from homology"/>
<feature type="chain" id="PRO_1000013217" description="UDP-3-O-acyl-N-acetylglucosamine deacetylase">
    <location>
        <begin position="1"/>
        <end position="303"/>
    </location>
</feature>
<feature type="active site" description="Proton donor" evidence="1">
    <location>
        <position position="264"/>
    </location>
</feature>
<feature type="binding site" evidence="1">
    <location>
        <position position="78"/>
    </location>
    <ligand>
        <name>Zn(2+)</name>
        <dbReference type="ChEBI" id="CHEBI:29105"/>
    </ligand>
</feature>
<feature type="binding site" evidence="1">
    <location>
        <position position="237"/>
    </location>
    <ligand>
        <name>Zn(2+)</name>
        <dbReference type="ChEBI" id="CHEBI:29105"/>
    </ligand>
</feature>
<feature type="binding site" evidence="1">
    <location>
        <position position="241"/>
    </location>
    <ligand>
        <name>Zn(2+)</name>
        <dbReference type="ChEBI" id="CHEBI:29105"/>
    </ligand>
</feature>
<accession>A6VB79</accession>
<evidence type="ECO:0000255" key="1">
    <source>
        <dbReference type="HAMAP-Rule" id="MF_00388"/>
    </source>
</evidence>
<organism>
    <name type="scientific">Pseudomonas paraeruginosa (strain DSM 24068 / PA7)</name>
    <name type="common">Pseudomonas aeruginosa (strain PA7)</name>
    <dbReference type="NCBI Taxonomy" id="381754"/>
    <lineage>
        <taxon>Bacteria</taxon>
        <taxon>Pseudomonadati</taxon>
        <taxon>Pseudomonadota</taxon>
        <taxon>Gammaproteobacteria</taxon>
        <taxon>Pseudomonadales</taxon>
        <taxon>Pseudomonadaceae</taxon>
        <taxon>Pseudomonas</taxon>
        <taxon>Pseudomonas paraeruginosa</taxon>
    </lineage>
</organism>
<gene>
    <name evidence="1" type="primary">lpxC</name>
    <name type="ordered locus">PSPA7_4978</name>
</gene>
<name>LPXC_PSEP7</name>
<comment type="function">
    <text evidence="1">Catalyzes the hydrolysis of UDP-3-O-myristoyl-N-acetylglucosamine to form UDP-3-O-myristoylglucosamine and acetate, the committed step in lipid A biosynthesis.</text>
</comment>
<comment type="catalytic activity">
    <reaction evidence="1">
        <text>a UDP-3-O-[(3R)-3-hydroxyacyl]-N-acetyl-alpha-D-glucosamine + H2O = a UDP-3-O-[(3R)-3-hydroxyacyl]-alpha-D-glucosamine + acetate</text>
        <dbReference type="Rhea" id="RHEA:67816"/>
        <dbReference type="ChEBI" id="CHEBI:15377"/>
        <dbReference type="ChEBI" id="CHEBI:30089"/>
        <dbReference type="ChEBI" id="CHEBI:137740"/>
        <dbReference type="ChEBI" id="CHEBI:173225"/>
        <dbReference type="EC" id="3.5.1.108"/>
    </reaction>
</comment>
<comment type="cofactor">
    <cofactor evidence="1">
        <name>Zn(2+)</name>
        <dbReference type="ChEBI" id="CHEBI:29105"/>
    </cofactor>
</comment>
<comment type="pathway">
    <text evidence="1">Glycolipid biosynthesis; lipid IV(A) biosynthesis; lipid IV(A) from (3R)-3-hydroxytetradecanoyl-[acyl-carrier-protein] and UDP-N-acetyl-alpha-D-glucosamine: step 2/6.</text>
</comment>
<comment type="similarity">
    <text evidence="1">Belongs to the LpxC family.</text>
</comment>